<proteinExistence type="evidence at transcript level"/>
<reference key="1">
    <citation type="journal article" date="2002" name="Mol. Phylogenet. Evol.">
        <title>Characterization and phylogenetic utility of the mammalian protamine P1 gene.</title>
        <authorList>
            <person name="Van Den Bussche R.A."/>
            <person name="Hoofer S.R."/>
            <person name="Hansen E.W."/>
        </authorList>
    </citation>
    <scope>NUCLEOTIDE SEQUENCE [GENOMIC DNA]</scope>
</reference>
<sequence>MARYRCCRSHSRSRCRRRRRRSRRRRRRSCGRRRRAGYRRYTVRYRRRR</sequence>
<gene>
    <name type="primary">PRM1</name>
</gene>
<keyword id="KW-0158">Chromosome</keyword>
<keyword id="KW-0217">Developmental protein</keyword>
<keyword id="KW-0221">Differentiation</keyword>
<keyword id="KW-0226">DNA condensation</keyword>
<keyword id="KW-0238">DNA-binding</keyword>
<keyword id="KW-0544">Nucleosome core</keyword>
<keyword id="KW-0539">Nucleus</keyword>
<keyword id="KW-0744">Spermatogenesis</keyword>
<feature type="chain" id="PRO_0000191480" description="Sperm protamine P1">
    <location>
        <begin position="1"/>
        <end position="49"/>
    </location>
</feature>
<feature type="region of interest" description="Disordered" evidence="2">
    <location>
        <begin position="1"/>
        <end position="49"/>
    </location>
</feature>
<protein>
    <recommendedName>
        <fullName>Sperm protamine P1</fullName>
    </recommendedName>
</protein>
<comment type="function">
    <text evidence="1">Protamines substitute for histones in the chromatin of sperm during the haploid phase of spermatogenesis. They compact sperm DNA into a highly condensed, stable and inactive complex (By similarity).</text>
</comment>
<comment type="subcellular location">
    <subcellularLocation>
        <location evidence="1">Nucleus</location>
    </subcellularLocation>
    <subcellularLocation>
        <location evidence="1">Chromosome</location>
    </subcellularLocation>
</comment>
<comment type="tissue specificity">
    <text>Testis.</text>
</comment>
<comment type="similarity">
    <text evidence="3">Belongs to the protamine P1 family.</text>
</comment>
<organism>
    <name type="scientific">Macronycteris commersonii</name>
    <name type="common">Commerson's roundleaf bat</name>
    <name type="synonym">Hipposideros commersonii</name>
    <dbReference type="NCBI Taxonomy" id="110941"/>
    <lineage>
        <taxon>Eukaryota</taxon>
        <taxon>Metazoa</taxon>
        <taxon>Chordata</taxon>
        <taxon>Craniata</taxon>
        <taxon>Vertebrata</taxon>
        <taxon>Euteleostomi</taxon>
        <taxon>Mammalia</taxon>
        <taxon>Eutheria</taxon>
        <taxon>Laurasiatheria</taxon>
        <taxon>Chiroptera</taxon>
        <taxon>Yinpterochiroptera</taxon>
        <taxon>Rhinolophoidea</taxon>
        <taxon>Hipposideridae</taxon>
        <taxon>Macronycteris</taxon>
    </lineage>
</organism>
<dbReference type="EMBL" id="AF435929">
    <property type="protein sequence ID" value="AAL35563.1"/>
    <property type="molecule type" value="Genomic_DNA"/>
</dbReference>
<dbReference type="GO" id="GO:0000786">
    <property type="term" value="C:nucleosome"/>
    <property type="evidence" value="ECO:0007669"/>
    <property type="project" value="UniProtKB-KW"/>
</dbReference>
<dbReference type="GO" id="GO:0005634">
    <property type="term" value="C:nucleus"/>
    <property type="evidence" value="ECO:0007669"/>
    <property type="project" value="UniProtKB-SubCell"/>
</dbReference>
<dbReference type="GO" id="GO:0003677">
    <property type="term" value="F:DNA binding"/>
    <property type="evidence" value="ECO:0007669"/>
    <property type="project" value="UniProtKB-KW"/>
</dbReference>
<dbReference type="GO" id="GO:0030261">
    <property type="term" value="P:chromosome condensation"/>
    <property type="evidence" value="ECO:0007669"/>
    <property type="project" value="UniProtKB-KW"/>
</dbReference>
<dbReference type="GO" id="GO:0035092">
    <property type="term" value="P:sperm DNA condensation"/>
    <property type="evidence" value="ECO:0007669"/>
    <property type="project" value="InterPro"/>
</dbReference>
<dbReference type="InterPro" id="IPR000221">
    <property type="entry name" value="Protamine_P1"/>
</dbReference>
<dbReference type="Pfam" id="PF00260">
    <property type="entry name" value="Protamine_P1"/>
    <property type="match status" value="1"/>
</dbReference>
<dbReference type="PROSITE" id="PS00048">
    <property type="entry name" value="PROTAMINE_P1"/>
    <property type="match status" value="1"/>
</dbReference>
<evidence type="ECO:0000250" key="1"/>
<evidence type="ECO:0000256" key="2">
    <source>
        <dbReference type="SAM" id="MobiDB-lite"/>
    </source>
</evidence>
<evidence type="ECO:0000305" key="3"/>
<accession>Q8WNZ8</accession>
<name>HSP1_MACCM</name>